<keyword id="KW-1185">Reference proteome</keyword>
<keyword id="KW-0843">Virulence</keyword>
<reference key="1">
    <citation type="journal article" date="2002" name="J. Bacteriol.">
        <title>Whole-genome comparison of Mycobacterium tuberculosis clinical and laboratory strains.</title>
        <authorList>
            <person name="Fleischmann R.D."/>
            <person name="Alland D."/>
            <person name="Eisen J.A."/>
            <person name="Carpenter L."/>
            <person name="White O."/>
            <person name="Peterson J.D."/>
            <person name="DeBoy R.T."/>
            <person name="Dodson R.J."/>
            <person name="Gwinn M.L."/>
            <person name="Haft D.H."/>
            <person name="Hickey E.K."/>
            <person name="Kolonay J.F."/>
            <person name="Nelson W.C."/>
            <person name="Umayam L.A."/>
            <person name="Ermolaeva M.D."/>
            <person name="Salzberg S.L."/>
            <person name="Delcher A."/>
            <person name="Utterback T.R."/>
            <person name="Weidman J.F."/>
            <person name="Khouri H.M."/>
            <person name="Gill J."/>
            <person name="Mikula A."/>
            <person name="Bishai W."/>
            <person name="Jacobs W.R. Jr."/>
            <person name="Venter J.C."/>
            <person name="Fraser C.M."/>
        </authorList>
    </citation>
    <scope>NUCLEOTIDE SEQUENCE [LARGE SCALE GENOMIC DNA]</scope>
    <source>
        <strain>CDC 1551 / Oshkosh</strain>
    </source>
</reference>
<reference key="2">
    <citation type="journal article" date="2003" name="J. Exp. Med.">
        <title>Inhibition of respiration by nitric oxide induces a Mycobacterium tuberculosis dormancy program.</title>
        <authorList>
            <person name="Voskuil M.I."/>
            <person name="Schnappinger D."/>
            <person name="Visconti K.C."/>
            <person name="Harrell M.I."/>
            <person name="Dolganov G.M."/>
            <person name="Sherman D.R."/>
            <person name="Schoolnik G.K."/>
        </authorList>
    </citation>
    <scope>INDUCTION BY NITRIC OXIDE (NO) AND BY HYPOXIA</scope>
    <scope>DORMANCY REGULON</scope>
    <source>
        <strain>CDC 1551 / Oshkosh</strain>
    </source>
</reference>
<feature type="chain" id="PRO_0000427336" description="Dormancy associated translation inhibitor">
    <location>
        <begin position="1"/>
        <end position="273"/>
    </location>
</feature>
<comment type="function">
    <text evidence="1">Involved in translation regulation. Can also stimulate macrophages and peripheral blood mononuclear cells (PBMC) to secrete important cytokines that may be significant in granuloma formation and its maintenance. Increases secretion of IFN-gamma, TNF-alpha, IL-1 beta and IL-8 through human Toll-like receptor 2 (TLR2) signaling pathway.</text>
</comment>
<comment type="subunit">
    <text evidence="1">Interacts with human TLR2.</text>
</comment>
<comment type="induction">
    <text evidence="2">A member of the dormancy regulon. Induced in response to reduced oxygen tension (hypoxia) and low levels of nitric oxide (NO).</text>
</comment>
<protein>
    <recommendedName>
        <fullName evidence="1">Dormancy associated translation inhibitor</fullName>
        <shortName evidence="1">DATIN</shortName>
    </recommendedName>
</protein>
<name>DATIN_MYCTO</name>
<sequence>MEPKRSRLVVCAPEPSHAREFPDVAVFSGGRANASQAERLARAVGRVLADRGVTGGARVRLTMANCADGPTLVQINLQVGDTPLRAQAATAGIDDLRPALIRLDRQIVRASAQWCPRPWPDRPRRRLTTPAEALVTRRKPVVLRRATPLQAIAAMDAMDYDVHLFTDAETGEDAVVYRAGPSGLRLARQHHVFPPGWSRCRAPAGPPVPLIVNSRPTPVLTEAAAVDRAREHGLPFLFFTDQATGRGQLLYSRYDGNLGLITPTGDGVADGLA</sequence>
<dbReference type="EMBL" id="AE000516">
    <property type="protein sequence ID" value="AAK44311.1"/>
    <property type="molecule type" value="Genomic_DNA"/>
</dbReference>
<dbReference type="PIR" id="H70849">
    <property type="entry name" value="H70849"/>
</dbReference>
<dbReference type="RefSeq" id="WP_003400655.1">
    <property type="nucleotide sequence ID" value="NZ_KK341227.1"/>
</dbReference>
<dbReference type="SMR" id="P9WMA8"/>
<dbReference type="KEGG" id="mtc:MT0086"/>
<dbReference type="PATRIC" id="fig|83331.31.peg.91"/>
<dbReference type="HOGENOM" id="CLU_079045_0_0_11"/>
<dbReference type="Proteomes" id="UP000001020">
    <property type="component" value="Chromosome"/>
</dbReference>
<dbReference type="GO" id="GO:0022627">
    <property type="term" value="C:cytosolic small ribosomal subunit"/>
    <property type="evidence" value="ECO:0007669"/>
    <property type="project" value="TreeGrafter"/>
</dbReference>
<dbReference type="GO" id="GO:0043024">
    <property type="term" value="F:ribosomal small subunit binding"/>
    <property type="evidence" value="ECO:0007669"/>
    <property type="project" value="TreeGrafter"/>
</dbReference>
<dbReference type="GO" id="GO:0045900">
    <property type="term" value="P:negative regulation of translational elongation"/>
    <property type="evidence" value="ECO:0007669"/>
    <property type="project" value="TreeGrafter"/>
</dbReference>
<dbReference type="FunFam" id="3.30.505.50:FF:000005">
    <property type="entry name" value="Dormancy associated translation inhibitor"/>
    <property type="match status" value="1"/>
</dbReference>
<dbReference type="Gene3D" id="3.30.505.50">
    <property type="entry name" value="Sigma 54 modulation/S30EA ribosomal protein, C-terminal domain"/>
    <property type="match status" value="2"/>
</dbReference>
<dbReference type="InterPro" id="IPR050574">
    <property type="entry name" value="HPF/YfiA_ribosome-assoc"/>
</dbReference>
<dbReference type="InterPro" id="IPR032528">
    <property type="entry name" value="Ribosom_S30AE_C"/>
</dbReference>
<dbReference type="InterPro" id="IPR038416">
    <property type="entry name" value="Ribosom_S30AE_C_sf"/>
</dbReference>
<dbReference type="PANTHER" id="PTHR33231">
    <property type="entry name" value="30S RIBOSOMAL PROTEIN"/>
    <property type="match status" value="1"/>
</dbReference>
<dbReference type="PANTHER" id="PTHR33231:SF1">
    <property type="entry name" value="30S RIBOSOMAL PROTEIN"/>
    <property type="match status" value="1"/>
</dbReference>
<dbReference type="Pfam" id="PF16321">
    <property type="entry name" value="Ribosom_S30AE_C"/>
    <property type="match status" value="1"/>
</dbReference>
<accession>P9WMA8</accession>
<accession>L0T2D8</accession>
<accession>O53624</accession>
<accession>Q7DAH6</accession>
<evidence type="ECO:0000250" key="1">
    <source>
        <dbReference type="UniProtKB" id="P9WMA9"/>
    </source>
</evidence>
<evidence type="ECO:0000269" key="2">
    <source>
    </source>
</evidence>
<gene>
    <name type="ordered locus">MT0086</name>
</gene>
<proteinExistence type="evidence at transcript level"/>
<organism>
    <name type="scientific">Mycobacterium tuberculosis (strain CDC 1551 / Oshkosh)</name>
    <dbReference type="NCBI Taxonomy" id="83331"/>
    <lineage>
        <taxon>Bacteria</taxon>
        <taxon>Bacillati</taxon>
        <taxon>Actinomycetota</taxon>
        <taxon>Actinomycetes</taxon>
        <taxon>Mycobacteriales</taxon>
        <taxon>Mycobacteriaceae</taxon>
        <taxon>Mycobacterium</taxon>
        <taxon>Mycobacterium tuberculosis complex</taxon>
    </lineage>
</organism>